<proteinExistence type="inferred from homology"/>
<dbReference type="EMBL" id="CP000949">
    <property type="protein sequence ID" value="ACA74559.1"/>
    <property type="molecule type" value="Genomic_DNA"/>
</dbReference>
<dbReference type="SMR" id="B1JBQ7"/>
<dbReference type="STRING" id="390235.PputW619_4079"/>
<dbReference type="KEGG" id="ppw:PputW619_4079"/>
<dbReference type="eggNOG" id="COG0233">
    <property type="taxonomic scope" value="Bacteria"/>
</dbReference>
<dbReference type="HOGENOM" id="CLU_073981_2_0_6"/>
<dbReference type="OrthoDB" id="9804006at2"/>
<dbReference type="GO" id="GO:0005829">
    <property type="term" value="C:cytosol"/>
    <property type="evidence" value="ECO:0007669"/>
    <property type="project" value="GOC"/>
</dbReference>
<dbReference type="GO" id="GO:0043023">
    <property type="term" value="F:ribosomal large subunit binding"/>
    <property type="evidence" value="ECO:0007669"/>
    <property type="project" value="TreeGrafter"/>
</dbReference>
<dbReference type="GO" id="GO:0002184">
    <property type="term" value="P:cytoplasmic translational termination"/>
    <property type="evidence" value="ECO:0007669"/>
    <property type="project" value="TreeGrafter"/>
</dbReference>
<dbReference type="CDD" id="cd00520">
    <property type="entry name" value="RRF"/>
    <property type="match status" value="1"/>
</dbReference>
<dbReference type="FunFam" id="1.10.132.20:FF:000001">
    <property type="entry name" value="Ribosome-recycling factor"/>
    <property type="match status" value="1"/>
</dbReference>
<dbReference type="FunFam" id="3.30.1360.40:FF:000001">
    <property type="entry name" value="Ribosome-recycling factor"/>
    <property type="match status" value="1"/>
</dbReference>
<dbReference type="Gene3D" id="3.30.1360.40">
    <property type="match status" value="1"/>
</dbReference>
<dbReference type="Gene3D" id="1.10.132.20">
    <property type="entry name" value="Ribosome-recycling factor"/>
    <property type="match status" value="1"/>
</dbReference>
<dbReference type="HAMAP" id="MF_00040">
    <property type="entry name" value="RRF"/>
    <property type="match status" value="1"/>
</dbReference>
<dbReference type="InterPro" id="IPR002661">
    <property type="entry name" value="Ribosome_recyc_fac"/>
</dbReference>
<dbReference type="InterPro" id="IPR023584">
    <property type="entry name" value="Ribosome_recyc_fac_dom"/>
</dbReference>
<dbReference type="InterPro" id="IPR036191">
    <property type="entry name" value="RRF_sf"/>
</dbReference>
<dbReference type="NCBIfam" id="TIGR00496">
    <property type="entry name" value="frr"/>
    <property type="match status" value="1"/>
</dbReference>
<dbReference type="PANTHER" id="PTHR20982:SF3">
    <property type="entry name" value="MITOCHONDRIAL RIBOSOME RECYCLING FACTOR PSEUDO 1"/>
    <property type="match status" value="1"/>
</dbReference>
<dbReference type="PANTHER" id="PTHR20982">
    <property type="entry name" value="RIBOSOME RECYCLING FACTOR"/>
    <property type="match status" value="1"/>
</dbReference>
<dbReference type="Pfam" id="PF01765">
    <property type="entry name" value="RRF"/>
    <property type="match status" value="1"/>
</dbReference>
<dbReference type="SUPFAM" id="SSF55194">
    <property type="entry name" value="Ribosome recycling factor, RRF"/>
    <property type="match status" value="1"/>
</dbReference>
<keyword id="KW-0963">Cytoplasm</keyword>
<keyword id="KW-0648">Protein biosynthesis</keyword>
<comment type="function">
    <text evidence="1">Responsible for the release of ribosomes from messenger RNA at the termination of protein biosynthesis. May increase the efficiency of translation by recycling ribosomes from one round of translation to another.</text>
</comment>
<comment type="subcellular location">
    <subcellularLocation>
        <location evidence="1">Cytoplasm</location>
    </subcellularLocation>
</comment>
<comment type="similarity">
    <text evidence="1">Belongs to the RRF family.</text>
</comment>
<evidence type="ECO:0000255" key="1">
    <source>
        <dbReference type="HAMAP-Rule" id="MF_00040"/>
    </source>
</evidence>
<protein>
    <recommendedName>
        <fullName evidence="1">Ribosome-recycling factor</fullName>
        <shortName evidence="1">RRF</shortName>
    </recommendedName>
    <alternativeName>
        <fullName evidence="1">Ribosome-releasing factor</fullName>
    </alternativeName>
</protein>
<feature type="chain" id="PRO_1000090772" description="Ribosome-recycling factor">
    <location>
        <begin position="1"/>
        <end position="185"/>
    </location>
</feature>
<reference key="1">
    <citation type="submission" date="2008-02" db="EMBL/GenBank/DDBJ databases">
        <title>Complete sequence of Pseudomonas putida W619.</title>
        <authorList>
            <person name="Copeland A."/>
            <person name="Lucas S."/>
            <person name="Lapidus A."/>
            <person name="Barry K."/>
            <person name="Detter J.C."/>
            <person name="Glavina del Rio T."/>
            <person name="Dalin E."/>
            <person name="Tice H."/>
            <person name="Pitluck S."/>
            <person name="Chain P."/>
            <person name="Malfatti S."/>
            <person name="Shin M."/>
            <person name="Vergez L."/>
            <person name="Schmutz J."/>
            <person name="Larimer F."/>
            <person name="Land M."/>
            <person name="Hauser L."/>
            <person name="Kyrpides N."/>
            <person name="Kim E."/>
            <person name="Taghavi S."/>
            <person name="Vangronsveld D."/>
            <person name="van der Lelie D."/>
            <person name="Richardson P."/>
        </authorList>
    </citation>
    <scope>NUCLEOTIDE SEQUENCE [LARGE SCALE GENOMIC DNA]</scope>
    <source>
        <strain>W619</strain>
    </source>
</reference>
<accession>B1JBQ7</accession>
<gene>
    <name evidence="1" type="primary">frr</name>
    <name type="ordered locus">PputW619_4079</name>
</gene>
<name>RRF_PSEPW</name>
<organism>
    <name type="scientific">Pseudomonas putida (strain W619)</name>
    <dbReference type="NCBI Taxonomy" id="390235"/>
    <lineage>
        <taxon>Bacteria</taxon>
        <taxon>Pseudomonadati</taxon>
        <taxon>Pseudomonadota</taxon>
        <taxon>Gammaproteobacteria</taxon>
        <taxon>Pseudomonadales</taxon>
        <taxon>Pseudomonadaceae</taxon>
        <taxon>Pseudomonas</taxon>
    </lineage>
</organism>
<sequence>MINDIKKDAQDRMGKSIEALGRNLASIRTGRAHPSILDSVKVPAWGSEMPLNQVAAVSVEDARTLKIVAHDKNLSAAIEKAILTSDLGLNPSSAGTTIRVPMPALTEETRKGYTKQASAVAEDAKVAVRNVRRDALADLKKLTKDKEISEDEERRAADEIQKLTDKFVAEIDAAFKAKEKDLLAV</sequence>